<name>GLGC_HALH5</name>
<protein>
    <recommendedName>
        <fullName evidence="1">Glucose-1-phosphate adenylyltransferase</fullName>
        <ecNumber evidence="1">2.7.7.27</ecNumber>
    </recommendedName>
    <alternativeName>
        <fullName evidence="1">ADP-glucose pyrophosphorylase</fullName>
        <shortName evidence="1">ADPGlc PPase</shortName>
    </alternativeName>
    <alternativeName>
        <fullName evidence="1">ADP-glucose synthase</fullName>
    </alternativeName>
</protein>
<evidence type="ECO:0000255" key="1">
    <source>
        <dbReference type="HAMAP-Rule" id="MF_00624"/>
    </source>
</evidence>
<reference key="1">
    <citation type="journal article" date="2000" name="Nucleic Acids Res.">
        <title>Complete genome sequence of the alkaliphilic bacterium Bacillus halodurans and genomic sequence comparison with Bacillus subtilis.</title>
        <authorList>
            <person name="Takami H."/>
            <person name="Nakasone K."/>
            <person name="Takaki Y."/>
            <person name="Maeno G."/>
            <person name="Sasaki R."/>
            <person name="Masui N."/>
            <person name="Fuji F."/>
            <person name="Hirama C."/>
            <person name="Nakamura Y."/>
            <person name="Ogasawara N."/>
            <person name="Kuhara S."/>
            <person name="Horikoshi K."/>
        </authorList>
    </citation>
    <scope>NUCLEOTIDE SEQUENCE [LARGE SCALE GENOMIC DNA]</scope>
    <source>
        <strain>ATCC BAA-125 / DSM 18197 / FERM 7344 / JCM 9153 / C-125</strain>
    </source>
</reference>
<dbReference type="EC" id="2.7.7.27" evidence="1"/>
<dbReference type="EMBL" id="BA000004">
    <property type="protein sequence ID" value="BAB04806.1"/>
    <property type="molecule type" value="Genomic_DNA"/>
</dbReference>
<dbReference type="PIR" id="G83785">
    <property type="entry name" value="G83785"/>
</dbReference>
<dbReference type="RefSeq" id="WP_010897257.1">
    <property type="nucleotide sequence ID" value="NC_002570.2"/>
</dbReference>
<dbReference type="SMR" id="Q9KDX4"/>
<dbReference type="STRING" id="272558.gene:10726981"/>
<dbReference type="DNASU" id="892001"/>
<dbReference type="KEGG" id="bha:BH1087"/>
<dbReference type="eggNOG" id="COG0448">
    <property type="taxonomic scope" value="Bacteria"/>
</dbReference>
<dbReference type="HOGENOM" id="CLU_029499_14_0_9"/>
<dbReference type="UniPathway" id="UPA00164"/>
<dbReference type="Proteomes" id="UP000001258">
    <property type="component" value="Chromosome"/>
</dbReference>
<dbReference type="GO" id="GO:0005524">
    <property type="term" value="F:ATP binding"/>
    <property type="evidence" value="ECO:0007669"/>
    <property type="project" value="UniProtKB-KW"/>
</dbReference>
<dbReference type="GO" id="GO:0008878">
    <property type="term" value="F:glucose-1-phosphate adenylyltransferase activity"/>
    <property type="evidence" value="ECO:0007669"/>
    <property type="project" value="UniProtKB-UniRule"/>
</dbReference>
<dbReference type="GO" id="GO:0005978">
    <property type="term" value="P:glycogen biosynthetic process"/>
    <property type="evidence" value="ECO:0007669"/>
    <property type="project" value="UniProtKB-UniRule"/>
</dbReference>
<dbReference type="CDD" id="cd02508">
    <property type="entry name" value="ADP_Glucose_PP"/>
    <property type="match status" value="1"/>
</dbReference>
<dbReference type="CDD" id="cd04651">
    <property type="entry name" value="LbH_G1P_AT_C"/>
    <property type="match status" value="1"/>
</dbReference>
<dbReference type="Gene3D" id="2.160.10.10">
    <property type="entry name" value="Hexapeptide repeat proteins"/>
    <property type="match status" value="1"/>
</dbReference>
<dbReference type="Gene3D" id="3.90.550.10">
    <property type="entry name" value="Spore Coat Polysaccharide Biosynthesis Protein SpsA, Chain A"/>
    <property type="match status" value="1"/>
</dbReference>
<dbReference type="HAMAP" id="MF_00624">
    <property type="entry name" value="GlgC"/>
    <property type="match status" value="1"/>
</dbReference>
<dbReference type="InterPro" id="IPR011831">
    <property type="entry name" value="ADP-Glc_PPase"/>
</dbReference>
<dbReference type="InterPro" id="IPR005836">
    <property type="entry name" value="ADP_Glu_pyroP_CS"/>
</dbReference>
<dbReference type="InterPro" id="IPR023049">
    <property type="entry name" value="GlgC_bac"/>
</dbReference>
<dbReference type="InterPro" id="IPR056818">
    <property type="entry name" value="GlmU/GlgC-like_hexapep"/>
</dbReference>
<dbReference type="InterPro" id="IPR005835">
    <property type="entry name" value="NTP_transferase_dom"/>
</dbReference>
<dbReference type="InterPro" id="IPR029044">
    <property type="entry name" value="Nucleotide-diphossugar_trans"/>
</dbReference>
<dbReference type="InterPro" id="IPR011004">
    <property type="entry name" value="Trimer_LpxA-like_sf"/>
</dbReference>
<dbReference type="NCBIfam" id="TIGR02091">
    <property type="entry name" value="glgC"/>
    <property type="match status" value="1"/>
</dbReference>
<dbReference type="NCBIfam" id="NF003670">
    <property type="entry name" value="PRK05293.1"/>
    <property type="match status" value="1"/>
</dbReference>
<dbReference type="PANTHER" id="PTHR43523:SF2">
    <property type="entry name" value="GLUCOSE-1-PHOSPHATE ADENYLYLTRANSFERASE"/>
    <property type="match status" value="1"/>
</dbReference>
<dbReference type="PANTHER" id="PTHR43523">
    <property type="entry name" value="GLUCOSE-1-PHOSPHATE ADENYLYLTRANSFERASE-RELATED"/>
    <property type="match status" value="1"/>
</dbReference>
<dbReference type="Pfam" id="PF24894">
    <property type="entry name" value="Hexapep_GlmU"/>
    <property type="match status" value="1"/>
</dbReference>
<dbReference type="Pfam" id="PF00483">
    <property type="entry name" value="NTP_transferase"/>
    <property type="match status" value="1"/>
</dbReference>
<dbReference type="SUPFAM" id="SSF53448">
    <property type="entry name" value="Nucleotide-diphospho-sugar transferases"/>
    <property type="match status" value="1"/>
</dbReference>
<dbReference type="SUPFAM" id="SSF51161">
    <property type="entry name" value="Trimeric LpxA-like enzymes"/>
    <property type="match status" value="1"/>
</dbReference>
<dbReference type="PROSITE" id="PS00808">
    <property type="entry name" value="ADP_GLC_PYROPHOSPH_1"/>
    <property type="match status" value="1"/>
</dbReference>
<dbReference type="PROSITE" id="PS00809">
    <property type="entry name" value="ADP_GLC_PYROPHOSPH_2"/>
    <property type="match status" value="1"/>
</dbReference>
<dbReference type="PROSITE" id="PS00810">
    <property type="entry name" value="ADP_GLC_PYROPHOSPH_3"/>
    <property type="match status" value="1"/>
</dbReference>
<sequence>MKKEIVGMLLAGGEGKRLGQLTRKLAKPAVYFGGKYRIIDFPLSNCTNSGIDTVGVLTQYEPLALNGHIGIGSPWDLDRRHGGVTVLPPYIEKQGGSWYKGTADAIYQNRYYIEQYDPEYVLILSGDHIYKMDYDRMISHHKKLGADATISVIEVPWEEASRFGIMNTNEEMTITQFEEKPTTPISNLASMGIYIFNWSVLKSYLIQDAKQANSSHDFGKDIIPKMLAKDLKLVAYPFEGYWKDVGTIKSYWEANMDLLDEHSSLMLNDPSWRIYSVNRNQPPQYISTRAYVRCSLVNEGCVVHGNVEQSILFPGVHIGANSSVFESVLMPNVKVGENVVLRRTIIMEGACIPSGTHLAPSDPDDILVIDKDTEFSPSIAANQ</sequence>
<gene>
    <name evidence="1" type="primary">glgC</name>
    <name type="ordered locus">BH1087</name>
</gene>
<accession>Q9KDX4</accession>
<feature type="chain" id="PRO_0000195280" description="Glucose-1-phosphate adenylyltransferase">
    <location>
        <begin position="1"/>
        <end position="383"/>
    </location>
</feature>
<feature type="binding site" evidence="1">
    <location>
        <position position="99"/>
    </location>
    <ligand>
        <name>alpha-D-glucose 1-phosphate</name>
        <dbReference type="ChEBI" id="CHEBI:58601"/>
    </ligand>
</feature>
<feature type="binding site" evidence="1">
    <location>
        <position position="164"/>
    </location>
    <ligand>
        <name>alpha-D-glucose 1-phosphate</name>
        <dbReference type="ChEBI" id="CHEBI:58601"/>
    </ligand>
</feature>
<feature type="binding site" evidence="1">
    <location>
        <begin position="179"/>
        <end position="180"/>
    </location>
    <ligand>
        <name>alpha-D-glucose 1-phosphate</name>
        <dbReference type="ChEBI" id="CHEBI:58601"/>
    </ligand>
</feature>
<feature type="binding site" evidence="1">
    <location>
        <position position="190"/>
    </location>
    <ligand>
        <name>alpha-D-glucose 1-phosphate</name>
        <dbReference type="ChEBI" id="CHEBI:58601"/>
    </ligand>
</feature>
<organism>
    <name type="scientific">Halalkalibacterium halodurans (strain ATCC BAA-125 / DSM 18197 / FERM 7344 / JCM 9153 / C-125)</name>
    <name type="common">Bacillus halodurans</name>
    <dbReference type="NCBI Taxonomy" id="272558"/>
    <lineage>
        <taxon>Bacteria</taxon>
        <taxon>Bacillati</taxon>
        <taxon>Bacillota</taxon>
        <taxon>Bacilli</taxon>
        <taxon>Bacillales</taxon>
        <taxon>Bacillaceae</taxon>
        <taxon>Halalkalibacterium (ex Joshi et al. 2022)</taxon>
    </lineage>
</organism>
<proteinExistence type="inferred from homology"/>
<keyword id="KW-0067">ATP-binding</keyword>
<keyword id="KW-0119">Carbohydrate metabolism</keyword>
<keyword id="KW-0320">Glycogen biosynthesis</keyword>
<keyword id="KW-0321">Glycogen metabolism</keyword>
<keyword id="KW-0547">Nucleotide-binding</keyword>
<keyword id="KW-0548">Nucleotidyltransferase</keyword>
<keyword id="KW-1185">Reference proteome</keyword>
<keyword id="KW-0808">Transferase</keyword>
<comment type="function">
    <text evidence="1">Involved in the biosynthesis of ADP-glucose, a building block required for the elongation reactions to produce glycogen. Catalyzes the reaction between ATP and alpha-D-glucose 1-phosphate (G1P) to produce pyrophosphate and ADP-Glc.</text>
</comment>
<comment type="catalytic activity">
    <reaction evidence="1">
        <text>alpha-D-glucose 1-phosphate + ATP + H(+) = ADP-alpha-D-glucose + diphosphate</text>
        <dbReference type="Rhea" id="RHEA:12120"/>
        <dbReference type="ChEBI" id="CHEBI:15378"/>
        <dbReference type="ChEBI" id="CHEBI:30616"/>
        <dbReference type="ChEBI" id="CHEBI:33019"/>
        <dbReference type="ChEBI" id="CHEBI:57498"/>
        <dbReference type="ChEBI" id="CHEBI:58601"/>
        <dbReference type="EC" id="2.7.7.27"/>
    </reaction>
</comment>
<comment type="pathway">
    <text evidence="1">Glycan biosynthesis; glycogen biosynthesis.</text>
</comment>
<comment type="subunit">
    <text evidence="1">Homotetramer.</text>
</comment>
<comment type="similarity">
    <text evidence="1">Belongs to the bacterial/plant glucose-1-phosphate adenylyltransferase family.</text>
</comment>